<accession>Q4QPM7</accession>
<gene>
    <name evidence="1" type="primary">grcA</name>
    <name type="ordered locus">NTHI0022</name>
</gene>
<proteinExistence type="inferred from homology"/>
<protein>
    <recommendedName>
        <fullName evidence="1">Autonomous glycyl radical cofactor</fullName>
    </recommendedName>
</protein>
<reference key="1">
    <citation type="journal article" date="2005" name="J. Bacteriol.">
        <title>Genomic sequence of an otitis media isolate of nontypeable Haemophilus influenzae: comparative study with H. influenzae serotype d, strain KW20.</title>
        <authorList>
            <person name="Harrison A."/>
            <person name="Dyer D.W."/>
            <person name="Gillaspy A."/>
            <person name="Ray W.C."/>
            <person name="Mungur R."/>
            <person name="Carson M.B."/>
            <person name="Zhong H."/>
            <person name="Gipson J."/>
            <person name="Gipson M."/>
            <person name="Johnson L.S."/>
            <person name="Lewis L."/>
            <person name="Bakaletz L.O."/>
            <person name="Munson R.S. Jr."/>
        </authorList>
    </citation>
    <scope>NUCLEOTIDE SEQUENCE [LARGE SCALE GENOMIC DNA]</scope>
    <source>
        <strain>86-028NP</strain>
    </source>
</reference>
<sequence>MIKGIQITQAANDNLLNSFWLLDSEKNEVRCLCAKGEFAEDQVVAVSELGQIEYRELPVNVAPTVKVEGGQHLNVNVLRRETLEDAVNNPDKYPQLTIRVSGYAVRFNSLTPEQQRDVITRTFTESL</sequence>
<feature type="chain" id="PRO_1000083723" description="Autonomous glycyl radical cofactor">
    <location>
        <begin position="1"/>
        <end position="127"/>
    </location>
</feature>
<feature type="domain" description="Glycine radical" evidence="1">
    <location>
        <begin position="5"/>
        <end position="127"/>
    </location>
</feature>
<feature type="modified residue" description="Glycine radical" evidence="1">
    <location>
        <position position="102"/>
    </location>
</feature>
<keyword id="KW-0556">Organic radical</keyword>
<name>GRCA_HAEI8</name>
<dbReference type="EMBL" id="CP000057">
    <property type="protein sequence ID" value="AAX87020.1"/>
    <property type="molecule type" value="Genomic_DNA"/>
</dbReference>
<dbReference type="RefSeq" id="WP_005687457.1">
    <property type="nucleotide sequence ID" value="NC_007146.2"/>
</dbReference>
<dbReference type="SMR" id="Q4QPM7"/>
<dbReference type="KEGG" id="hit:NTHI0022"/>
<dbReference type="HOGENOM" id="CLU_133780_0_0_6"/>
<dbReference type="Proteomes" id="UP000002525">
    <property type="component" value="Chromosome"/>
</dbReference>
<dbReference type="GO" id="GO:0005829">
    <property type="term" value="C:cytosol"/>
    <property type="evidence" value="ECO:0007669"/>
    <property type="project" value="TreeGrafter"/>
</dbReference>
<dbReference type="GO" id="GO:0008861">
    <property type="term" value="F:formate C-acetyltransferase activity"/>
    <property type="evidence" value="ECO:0007669"/>
    <property type="project" value="TreeGrafter"/>
</dbReference>
<dbReference type="FunFam" id="3.20.70.20:FF:000002">
    <property type="entry name" value="Autonomous glycyl radical cofactor"/>
    <property type="match status" value="1"/>
</dbReference>
<dbReference type="Gene3D" id="3.20.70.20">
    <property type="match status" value="1"/>
</dbReference>
<dbReference type="HAMAP" id="MF_00806">
    <property type="entry name" value="GrcA"/>
    <property type="match status" value="1"/>
</dbReference>
<dbReference type="InterPro" id="IPR050244">
    <property type="entry name" value="Auton_GlycylRad_Cofactor"/>
</dbReference>
<dbReference type="InterPro" id="IPR019777">
    <property type="entry name" value="Form_AcTrfase_GR_CS"/>
</dbReference>
<dbReference type="InterPro" id="IPR001150">
    <property type="entry name" value="Gly_radical"/>
</dbReference>
<dbReference type="InterPro" id="IPR011140">
    <property type="entry name" value="Glycyl_radical_cofactor_GrcA"/>
</dbReference>
<dbReference type="NCBIfam" id="TIGR04365">
    <property type="entry name" value="spare_glycyl"/>
    <property type="match status" value="1"/>
</dbReference>
<dbReference type="PANTHER" id="PTHR30191">
    <property type="entry name" value="FORMATE ACETYLTRANSFERASE"/>
    <property type="match status" value="1"/>
</dbReference>
<dbReference type="PANTHER" id="PTHR30191:SF0">
    <property type="entry name" value="FORMATE ACETYLTRANSFERASE 1"/>
    <property type="match status" value="1"/>
</dbReference>
<dbReference type="Pfam" id="PF01228">
    <property type="entry name" value="Gly_radical"/>
    <property type="match status" value="1"/>
</dbReference>
<dbReference type="PIRSF" id="PIRSF000378">
    <property type="entry name" value="Gly_radicl_yfiD"/>
    <property type="match status" value="1"/>
</dbReference>
<dbReference type="SUPFAM" id="SSF51998">
    <property type="entry name" value="PFL-like glycyl radical enzymes"/>
    <property type="match status" value="1"/>
</dbReference>
<dbReference type="PROSITE" id="PS00850">
    <property type="entry name" value="GLY_RADICAL_1"/>
    <property type="match status" value="1"/>
</dbReference>
<dbReference type="PROSITE" id="PS51149">
    <property type="entry name" value="GLY_RADICAL_2"/>
    <property type="match status" value="1"/>
</dbReference>
<evidence type="ECO:0000255" key="1">
    <source>
        <dbReference type="HAMAP-Rule" id="MF_00806"/>
    </source>
</evidence>
<comment type="function">
    <text evidence="1">Acts as a radical domain for damaged PFL and possibly other radical proteins.</text>
</comment>
<organism>
    <name type="scientific">Haemophilus influenzae (strain 86-028NP)</name>
    <dbReference type="NCBI Taxonomy" id="281310"/>
    <lineage>
        <taxon>Bacteria</taxon>
        <taxon>Pseudomonadati</taxon>
        <taxon>Pseudomonadota</taxon>
        <taxon>Gammaproteobacteria</taxon>
        <taxon>Pasteurellales</taxon>
        <taxon>Pasteurellaceae</taxon>
        <taxon>Haemophilus</taxon>
    </lineage>
</organism>